<dbReference type="EC" id="2.7.7.6" evidence="1"/>
<dbReference type="EMBL" id="AP009324">
    <property type="protein sequence ID" value="BAF77423.1"/>
    <property type="molecule type" value="Genomic_DNA"/>
</dbReference>
<dbReference type="RefSeq" id="WP_000918667.1">
    <property type="nucleotide sequence ID" value="NC_009782.1"/>
</dbReference>
<dbReference type="SMR" id="A7WYW7"/>
<dbReference type="KEGG" id="saw:SAHV_0540"/>
<dbReference type="HOGENOM" id="CLU_000524_4_1_9"/>
<dbReference type="GO" id="GO:0000428">
    <property type="term" value="C:DNA-directed RNA polymerase complex"/>
    <property type="evidence" value="ECO:0007669"/>
    <property type="project" value="UniProtKB-KW"/>
</dbReference>
<dbReference type="GO" id="GO:0003677">
    <property type="term" value="F:DNA binding"/>
    <property type="evidence" value="ECO:0007669"/>
    <property type="project" value="UniProtKB-UniRule"/>
</dbReference>
<dbReference type="GO" id="GO:0003899">
    <property type="term" value="F:DNA-directed RNA polymerase activity"/>
    <property type="evidence" value="ECO:0007669"/>
    <property type="project" value="UniProtKB-UniRule"/>
</dbReference>
<dbReference type="GO" id="GO:0032549">
    <property type="term" value="F:ribonucleoside binding"/>
    <property type="evidence" value="ECO:0007669"/>
    <property type="project" value="InterPro"/>
</dbReference>
<dbReference type="GO" id="GO:0006351">
    <property type="term" value="P:DNA-templated transcription"/>
    <property type="evidence" value="ECO:0007669"/>
    <property type="project" value="UniProtKB-UniRule"/>
</dbReference>
<dbReference type="CDD" id="cd00653">
    <property type="entry name" value="RNA_pol_B_RPB2"/>
    <property type="match status" value="1"/>
</dbReference>
<dbReference type="FunFam" id="3.90.1800.10:FF:000001">
    <property type="entry name" value="DNA-directed RNA polymerase subunit beta"/>
    <property type="match status" value="1"/>
</dbReference>
<dbReference type="Gene3D" id="2.40.50.100">
    <property type="match status" value="1"/>
</dbReference>
<dbReference type="Gene3D" id="2.40.50.150">
    <property type="match status" value="1"/>
</dbReference>
<dbReference type="Gene3D" id="3.90.1100.10">
    <property type="match status" value="3"/>
</dbReference>
<dbReference type="Gene3D" id="2.40.270.10">
    <property type="entry name" value="DNA-directed RNA polymerase, subunit 2, domain 6"/>
    <property type="match status" value="1"/>
</dbReference>
<dbReference type="Gene3D" id="3.90.1800.10">
    <property type="entry name" value="RNA polymerase alpha subunit dimerisation domain"/>
    <property type="match status" value="1"/>
</dbReference>
<dbReference type="Gene3D" id="3.90.1110.10">
    <property type="entry name" value="RNA polymerase Rpb2, domain 2"/>
    <property type="match status" value="1"/>
</dbReference>
<dbReference type="HAMAP" id="MF_01321">
    <property type="entry name" value="RNApol_bact_RpoB"/>
    <property type="match status" value="1"/>
</dbReference>
<dbReference type="InterPro" id="IPR019462">
    <property type="entry name" value="DNA-dir_RNA_pol_bsu_external_1"/>
</dbReference>
<dbReference type="InterPro" id="IPR015712">
    <property type="entry name" value="DNA-dir_RNA_pol_su2"/>
</dbReference>
<dbReference type="InterPro" id="IPR007120">
    <property type="entry name" value="DNA-dir_RNAP_su2_dom"/>
</dbReference>
<dbReference type="InterPro" id="IPR037033">
    <property type="entry name" value="DNA-dir_RNAP_su2_hyb_sf"/>
</dbReference>
<dbReference type="InterPro" id="IPR010243">
    <property type="entry name" value="RNA_pol_bsu_bac"/>
</dbReference>
<dbReference type="InterPro" id="IPR007121">
    <property type="entry name" value="RNA_pol_bsu_CS"/>
</dbReference>
<dbReference type="InterPro" id="IPR007644">
    <property type="entry name" value="RNA_pol_bsu_protrusion"/>
</dbReference>
<dbReference type="InterPro" id="IPR007642">
    <property type="entry name" value="RNA_pol_Rpb2_2"/>
</dbReference>
<dbReference type="InterPro" id="IPR037034">
    <property type="entry name" value="RNA_pol_Rpb2_2_sf"/>
</dbReference>
<dbReference type="InterPro" id="IPR007645">
    <property type="entry name" value="RNA_pol_Rpb2_3"/>
</dbReference>
<dbReference type="InterPro" id="IPR007641">
    <property type="entry name" value="RNA_pol_Rpb2_7"/>
</dbReference>
<dbReference type="InterPro" id="IPR014724">
    <property type="entry name" value="RNA_pol_RPB2_OB-fold"/>
</dbReference>
<dbReference type="NCBIfam" id="NF001616">
    <property type="entry name" value="PRK00405.1"/>
    <property type="match status" value="1"/>
</dbReference>
<dbReference type="NCBIfam" id="TIGR02013">
    <property type="entry name" value="rpoB"/>
    <property type="match status" value="1"/>
</dbReference>
<dbReference type="PANTHER" id="PTHR20856">
    <property type="entry name" value="DNA-DIRECTED RNA POLYMERASE I SUBUNIT 2"/>
    <property type="match status" value="1"/>
</dbReference>
<dbReference type="Pfam" id="PF04563">
    <property type="entry name" value="RNA_pol_Rpb2_1"/>
    <property type="match status" value="1"/>
</dbReference>
<dbReference type="Pfam" id="PF04561">
    <property type="entry name" value="RNA_pol_Rpb2_2"/>
    <property type="match status" value="2"/>
</dbReference>
<dbReference type="Pfam" id="PF04565">
    <property type="entry name" value="RNA_pol_Rpb2_3"/>
    <property type="match status" value="1"/>
</dbReference>
<dbReference type="Pfam" id="PF10385">
    <property type="entry name" value="RNA_pol_Rpb2_45"/>
    <property type="match status" value="1"/>
</dbReference>
<dbReference type="Pfam" id="PF00562">
    <property type="entry name" value="RNA_pol_Rpb2_6"/>
    <property type="match status" value="1"/>
</dbReference>
<dbReference type="Pfam" id="PF04560">
    <property type="entry name" value="RNA_pol_Rpb2_7"/>
    <property type="match status" value="1"/>
</dbReference>
<dbReference type="SUPFAM" id="SSF64484">
    <property type="entry name" value="beta and beta-prime subunits of DNA dependent RNA-polymerase"/>
    <property type="match status" value="1"/>
</dbReference>
<dbReference type="PROSITE" id="PS01166">
    <property type="entry name" value="RNA_POL_BETA"/>
    <property type="match status" value="1"/>
</dbReference>
<accession>A7WYW7</accession>
<reference key="1">
    <citation type="journal article" date="2008" name="Antimicrob. Agents Chemother.">
        <title>Mutated response regulator graR is responsible for phenotypic conversion of Staphylococcus aureus from heterogeneous vancomycin-intermediate resistance to vancomycin-intermediate resistance.</title>
        <authorList>
            <person name="Neoh H.-M."/>
            <person name="Cui L."/>
            <person name="Yuzawa H."/>
            <person name="Takeuchi F."/>
            <person name="Matsuo M."/>
            <person name="Hiramatsu K."/>
        </authorList>
    </citation>
    <scope>NUCLEOTIDE SEQUENCE [LARGE SCALE GENOMIC DNA]</scope>
    <source>
        <strain>Mu3 / ATCC 700698</strain>
    </source>
</reference>
<feature type="chain" id="PRO_1000051984" description="DNA-directed RNA polymerase subunit beta">
    <location>
        <begin position="1"/>
        <end position="1183"/>
    </location>
</feature>
<protein>
    <recommendedName>
        <fullName evidence="1">DNA-directed RNA polymerase subunit beta</fullName>
        <shortName evidence="1">RNAP subunit beta</shortName>
        <ecNumber evidence="1">2.7.7.6</ecNumber>
    </recommendedName>
    <alternativeName>
        <fullName evidence="1">RNA polymerase subunit beta</fullName>
    </alternativeName>
    <alternativeName>
        <fullName evidence="1">Transcriptase subunit beta</fullName>
    </alternativeName>
</protein>
<name>RPOB_STAA1</name>
<keyword id="KW-0240">DNA-directed RNA polymerase</keyword>
<keyword id="KW-0548">Nucleotidyltransferase</keyword>
<keyword id="KW-0804">Transcription</keyword>
<keyword id="KW-0808">Transferase</keyword>
<gene>
    <name evidence="1" type="primary">rpoB</name>
    <name type="ordered locus">SAHV_0540</name>
</gene>
<organism>
    <name type="scientific">Staphylococcus aureus (strain Mu3 / ATCC 700698)</name>
    <dbReference type="NCBI Taxonomy" id="418127"/>
    <lineage>
        <taxon>Bacteria</taxon>
        <taxon>Bacillati</taxon>
        <taxon>Bacillota</taxon>
        <taxon>Bacilli</taxon>
        <taxon>Bacillales</taxon>
        <taxon>Staphylococcaceae</taxon>
        <taxon>Staphylococcus</taxon>
    </lineage>
</organism>
<proteinExistence type="inferred from homology"/>
<evidence type="ECO:0000255" key="1">
    <source>
        <dbReference type="HAMAP-Rule" id="MF_01321"/>
    </source>
</evidence>
<comment type="function">
    <text evidence="1">DNA-dependent RNA polymerase catalyzes the transcription of DNA into RNA using the four ribonucleoside triphosphates as substrates.</text>
</comment>
<comment type="catalytic activity">
    <reaction evidence="1">
        <text>RNA(n) + a ribonucleoside 5'-triphosphate = RNA(n+1) + diphosphate</text>
        <dbReference type="Rhea" id="RHEA:21248"/>
        <dbReference type="Rhea" id="RHEA-COMP:14527"/>
        <dbReference type="Rhea" id="RHEA-COMP:17342"/>
        <dbReference type="ChEBI" id="CHEBI:33019"/>
        <dbReference type="ChEBI" id="CHEBI:61557"/>
        <dbReference type="ChEBI" id="CHEBI:140395"/>
        <dbReference type="EC" id="2.7.7.6"/>
    </reaction>
</comment>
<comment type="subunit">
    <text evidence="1">The RNAP catalytic core consists of 2 alpha, 1 beta, 1 beta' and 1 omega subunit. When a sigma factor is associated with the core the holoenzyme is formed, which can initiate transcription.</text>
</comment>
<comment type="similarity">
    <text evidence="1">Belongs to the RNA polymerase beta chain family.</text>
</comment>
<sequence>MAGQVVQYGRHRKRRNYARISEVLELPNLIEIQTKSYEWFLREGLIEMFRDISPIEDFTGNLSLEFVDYRLGEPKYDLEESKNRDATYAAPLRVKVRLIIKETGEVKEQEVFMGDFPLMTDTGTFVINGAERVIVSQLVRSPSVYFNEKIDKNGRENYDATIIPNRGAWLEYETDAKDVVYVRIDRTRKLPLTVLLRALGFSSDQEIVDLLGDNEYLRNTLEKDGTENTEQALLEIYERLRPGEPPTVENAKSLLYSRFFDPKRYDLASVGRYKTNKKLHLKHRLFNQKLAEPIVNTETGEIVVEEGTVLDRRKIDEIMDVLESNANSEVFELHGSVIDEPVEIQSIKVYVPNDDEGRTTTVIGNAFPDSEVKCITPADIIASMSYFFNLLSGIGYTDDIDHLGNRRLRSVGELLQNQFRIGLSRMERVVRERMSIQDTESITPQQLINIRPVIASIKEFFGSSQLSQFMDQANPLAELTHKRRLSALGPGGLTRERAQMEVRDVHYSHYGRMCPIETPEGPNIGLINSLSSYARVNEFGFIETPYRKVDLDTHAITDQIDYLTADEEDSYVVAQANSKLDENGRFMDDEVVCRFRGNNTVMAKEKMDYMDVSPKQVVSAATACIPFLENDDSNRALMGANMQRQAVPLMNPEAPFVGTGMEHVAARDSGAAITAKHRGRVEHVESNEILVRRLVEENGVEHEGELDRYPLAKFKRSNSGTCYNQRPIVAVGDVVEYNEILADGPSMELGEMALGRNVVVGFMTWDGYNYEDAVIMSERLVKDDVYTSIHIEEYESEARDTKLGPEEITRDIPNVSESALKNLDDRGIVYIGAEVKDGDILVGKVTPKGVTELTAEERLLHAIFGEKAREVRDTSLRVPHGAGGIVLDVKVFNREEGDDTLSPGVNQLVRVYIVQKRKIHVGDKMCGRHGNKGVISKIVPEEDMPYLPDGRPIDIMLNPLGVPSRMNIGQVLELHLGMAAKNLGIHVASPVFDGANDDDVWSTIEEAGMARDGKTVLYDGRTGEPFDNRISVGVMYMLKLAHMVDDKLHARSTGPYSLVTQQPLGGKAQFGGQRFGEMEVWALEAYGAAYTLQEILTYKSDDTVGRVKTYEAIVKGENISRPSVPESFRVLMKELQSLGLDVKVMDEQDNEIEMTDVDDDDVVERKVDLQQNDAPETQKEVTD</sequence>